<gene>
    <name evidence="1" type="primary">ribH</name>
    <name type="ordered locus">Bd3037</name>
</gene>
<sequence length="179" mass="19035">MGKIKVGVVTARWNQEITSKLEEGAISYLEACEDVEIFAALVPGAVEIPLACQAFLEAGCDGVVALGVVIRGDTSHYDYVCNSVTDGVTRLMLDYKKPIGFGVLTTENEEQALARAGGDHGNKGEEAAQVTMEMIGLTQEIPAAMKTALMLAKKAPAKAAKKPAKAAAKTQKKKKKVRK</sequence>
<comment type="function">
    <text evidence="1">Catalyzes the formation of 6,7-dimethyl-8-ribityllumazine by condensation of 5-amino-6-(D-ribitylamino)uracil with 3,4-dihydroxy-2-butanone 4-phosphate. This is the penultimate step in the biosynthesis of riboflavin.</text>
</comment>
<comment type="catalytic activity">
    <reaction evidence="1">
        <text>(2S)-2-hydroxy-3-oxobutyl phosphate + 5-amino-6-(D-ribitylamino)uracil = 6,7-dimethyl-8-(1-D-ribityl)lumazine + phosphate + 2 H2O + H(+)</text>
        <dbReference type="Rhea" id="RHEA:26152"/>
        <dbReference type="ChEBI" id="CHEBI:15377"/>
        <dbReference type="ChEBI" id="CHEBI:15378"/>
        <dbReference type="ChEBI" id="CHEBI:15934"/>
        <dbReference type="ChEBI" id="CHEBI:43474"/>
        <dbReference type="ChEBI" id="CHEBI:58201"/>
        <dbReference type="ChEBI" id="CHEBI:58830"/>
        <dbReference type="EC" id="2.5.1.78"/>
    </reaction>
</comment>
<comment type="pathway">
    <text evidence="1">Cofactor biosynthesis; riboflavin biosynthesis; riboflavin from 2-hydroxy-3-oxobutyl phosphate and 5-amino-6-(D-ribitylamino)uracil: step 1/2.</text>
</comment>
<comment type="similarity">
    <text evidence="1">Belongs to the DMRL synthase family.</text>
</comment>
<organism>
    <name type="scientific">Bdellovibrio bacteriovorus (strain ATCC 15356 / DSM 50701 / NCIMB 9529 / HD100)</name>
    <dbReference type="NCBI Taxonomy" id="264462"/>
    <lineage>
        <taxon>Bacteria</taxon>
        <taxon>Pseudomonadati</taxon>
        <taxon>Bdellovibrionota</taxon>
        <taxon>Bdellovibrionia</taxon>
        <taxon>Bdellovibrionales</taxon>
        <taxon>Pseudobdellovibrionaceae</taxon>
        <taxon>Bdellovibrio</taxon>
    </lineage>
</organism>
<feature type="chain" id="PRO_0000134718" description="6,7-dimethyl-8-ribityllumazine synthase">
    <location>
        <begin position="1"/>
        <end position="179"/>
    </location>
</feature>
<feature type="region of interest" description="Disordered" evidence="2">
    <location>
        <begin position="157"/>
        <end position="179"/>
    </location>
</feature>
<feature type="active site" description="Proton donor" evidence="1">
    <location>
        <position position="76"/>
    </location>
</feature>
<feature type="binding site" evidence="1">
    <location>
        <position position="13"/>
    </location>
    <ligand>
        <name>5-amino-6-(D-ribitylamino)uracil</name>
        <dbReference type="ChEBI" id="CHEBI:15934"/>
    </ligand>
</feature>
<feature type="binding site" evidence="1">
    <location>
        <begin position="45"/>
        <end position="47"/>
    </location>
    <ligand>
        <name>5-amino-6-(D-ribitylamino)uracil</name>
        <dbReference type="ChEBI" id="CHEBI:15934"/>
    </ligand>
</feature>
<feature type="binding site" evidence="1">
    <location>
        <begin position="68"/>
        <end position="70"/>
    </location>
    <ligand>
        <name>5-amino-6-(D-ribitylamino)uracil</name>
        <dbReference type="ChEBI" id="CHEBI:15934"/>
    </ligand>
</feature>
<feature type="binding site" evidence="1">
    <location>
        <begin position="73"/>
        <end position="74"/>
    </location>
    <ligand>
        <name>(2S)-2-hydroxy-3-oxobutyl phosphate</name>
        <dbReference type="ChEBI" id="CHEBI:58830"/>
    </ligand>
</feature>
<feature type="binding site" evidence="1">
    <location>
        <position position="101"/>
    </location>
    <ligand>
        <name>5-amino-6-(D-ribitylamino)uracil</name>
        <dbReference type="ChEBI" id="CHEBI:15934"/>
    </ligand>
</feature>
<feature type="binding site" evidence="1">
    <location>
        <position position="115"/>
    </location>
    <ligand>
        <name>(2S)-2-hydroxy-3-oxobutyl phosphate</name>
        <dbReference type="ChEBI" id="CHEBI:58830"/>
    </ligand>
</feature>
<accession>P61720</accession>
<keyword id="KW-1185">Reference proteome</keyword>
<keyword id="KW-0686">Riboflavin biosynthesis</keyword>
<keyword id="KW-0808">Transferase</keyword>
<protein>
    <recommendedName>
        <fullName evidence="1">6,7-dimethyl-8-ribityllumazine synthase</fullName>
        <shortName evidence="1">DMRL synthase</shortName>
        <shortName evidence="1">LS</shortName>
        <shortName evidence="1">Lumazine synthase</shortName>
        <ecNumber evidence="1">2.5.1.78</ecNumber>
    </recommendedName>
</protein>
<reference key="1">
    <citation type="journal article" date="2004" name="Science">
        <title>A predator unmasked: life cycle of Bdellovibrio bacteriovorus from a genomic perspective.</title>
        <authorList>
            <person name="Rendulic S."/>
            <person name="Jagtap P."/>
            <person name="Rosinus A."/>
            <person name="Eppinger M."/>
            <person name="Baar C."/>
            <person name="Lanz C."/>
            <person name="Keller H."/>
            <person name="Lambert C."/>
            <person name="Evans K.J."/>
            <person name="Goesmann A."/>
            <person name="Meyer F."/>
            <person name="Sockett R.E."/>
            <person name="Schuster S.C."/>
        </authorList>
    </citation>
    <scope>NUCLEOTIDE SEQUENCE [LARGE SCALE GENOMIC DNA]</scope>
    <source>
        <strain>ATCC 15356 / DSM 50701 / NCIMB 9529 / HD100</strain>
    </source>
</reference>
<evidence type="ECO:0000255" key="1">
    <source>
        <dbReference type="HAMAP-Rule" id="MF_00178"/>
    </source>
</evidence>
<evidence type="ECO:0000256" key="2">
    <source>
        <dbReference type="SAM" id="MobiDB-lite"/>
    </source>
</evidence>
<proteinExistence type="inferred from homology"/>
<name>RISB_BDEBA</name>
<dbReference type="EC" id="2.5.1.78" evidence="1"/>
<dbReference type="EMBL" id="BX842654">
    <property type="protein sequence ID" value="CAE80804.1"/>
    <property type="molecule type" value="Genomic_DNA"/>
</dbReference>
<dbReference type="RefSeq" id="WP_011165408.1">
    <property type="nucleotide sequence ID" value="NC_005363.1"/>
</dbReference>
<dbReference type="SMR" id="P61720"/>
<dbReference type="STRING" id="264462.Bd3037"/>
<dbReference type="GeneID" id="93013898"/>
<dbReference type="KEGG" id="bba:Bd3037"/>
<dbReference type="eggNOG" id="COG0054">
    <property type="taxonomic scope" value="Bacteria"/>
</dbReference>
<dbReference type="HOGENOM" id="CLU_089358_1_2_7"/>
<dbReference type="UniPathway" id="UPA00275">
    <property type="reaction ID" value="UER00404"/>
</dbReference>
<dbReference type="Proteomes" id="UP000008080">
    <property type="component" value="Chromosome"/>
</dbReference>
<dbReference type="GO" id="GO:0005829">
    <property type="term" value="C:cytosol"/>
    <property type="evidence" value="ECO:0007669"/>
    <property type="project" value="TreeGrafter"/>
</dbReference>
<dbReference type="GO" id="GO:0009349">
    <property type="term" value="C:riboflavin synthase complex"/>
    <property type="evidence" value="ECO:0007669"/>
    <property type="project" value="InterPro"/>
</dbReference>
<dbReference type="GO" id="GO:0000906">
    <property type="term" value="F:6,7-dimethyl-8-ribityllumazine synthase activity"/>
    <property type="evidence" value="ECO:0007669"/>
    <property type="project" value="UniProtKB-UniRule"/>
</dbReference>
<dbReference type="GO" id="GO:0009231">
    <property type="term" value="P:riboflavin biosynthetic process"/>
    <property type="evidence" value="ECO:0007669"/>
    <property type="project" value="UniProtKB-UniRule"/>
</dbReference>
<dbReference type="CDD" id="cd09209">
    <property type="entry name" value="Lumazine_synthase-I"/>
    <property type="match status" value="1"/>
</dbReference>
<dbReference type="Gene3D" id="3.40.50.960">
    <property type="entry name" value="Lumazine/riboflavin synthase"/>
    <property type="match status" value="1"/>
</dbReference>
<dbReference type="HAMAP" id="MF_00178">
    <property type="entry name" value="Lumazine_synth"/>
    <property type="match status" value="1"/>
</dbReference>
<dbReference type="InterPro" id="IPR034964">
    <property type="entry name" value="LS"/>
</dbReference>
<dbReference type="InterPro" id="IPR002180">
    <property type="entry name" value="LS/RS"/>
</dbReference>
<dbReference type="InterPro" id="IPR036467">
    <property type="entry name" value="LS/RS_sf"/>
</dbReference>
<dbReference type="NCBIfam" id="TIGR00114">
    <property type="entry name" value="lumazine-synth"/>
    <property type="match status" value="1"/>
</dbReference>
<dbReference type="PANTHER" id="PTHR21058:SF0">
    <property type="entry name" value="6,7-DIMETHYL-8-RIBITYLLUMAZINE SYNTHASE"/>
    <property type="match status" value="1"/>
</dbReference>
<dbReference type="PANTHER" id="PTHR21058">
    <property type="entry name" value="6,7-DIMETHYL-8-RIBITYLLUMAZINE SYNTHASE DMRL SYNTHASE LUMAZINE SYNTHASE"/>
    <property type="match status" value="1"/>
</dbReference>
<dbReference type="Pfam" id="PF00885">
    <property type="entry name" value="DMRL_synthase"/>
    <property type="match status" value="1"/>
</dbReference>
<dbReference type="SUPFAM" id="SSF52121">
    <property type="entry name" value="Lumazine synthase"/>
    <property type="match status" value="1"/>
</dbReference>